<proteinExistence type="inferred from homology"/>
<name>NCAP_CVCAI</name>
<comment type="function">
    <text evidence="1">Packages the positive strand viral genome RNA into a helical ribonucleocapsid (RNP) and plays a fundamental role during virion assembly through its interactions with the viral genome and membrane protein M. Plays an important role in enhancing the efficiency of subgenomic viral RNA transcription as well as viral replication.</text>
</comment>
<comment type="subunit">
    <text evidence="1">Homooligomer. Both monomeric and oligomeric forms interact with RNA. Interacts with protein M. Interacts with NSP3; this interaction serves to tether the genome to the newly translated replicase-transcriptase complex at a very early stage of infection.</text>
</comment>
<comment type="subcellular location">
    <subcellularLocation>
        <location evidence="1">Virion</location>
    </subcellularLocation>
    <subcellularLocation>
        <location evidence="1">Host endoplasmic reticulum-Golgi intermediate compartment</location>
    </subcellularLocation>
    <subcellularLocation>
        <location evidence="1">Host Golgi apparatus</location>
    </subcellularLocation>
    <text evidence="1">Located inside the virion, complexed with the viral RNA. Probably associates with ER-derived membranes where it participates in viral RNA synthesis and virus budding.</text>
</comment>
<comment type="PTM">
    <text evidence="1">ADP-ribosylated. The ADP-ribosylation is retained in the virion during infection.</text>
</comment>
<comment type="PTM">
    <text evidence="1">Phosphorylated on serine and threonine residues.</text>
</comment>
<comment type="similarity">
    <text evidence="1">Belongs to the alphacoronavirus nucleocapsid protein family.</text>
</comment>
<feature type="chain" id="PRO_0000105998" description="Nucleoprotein">
    <location>
        <begin position="1"/>
        <end position="381"/>
    </location>
</feature>
<feature type="domain" description="CoV N NTD" evidence="2">
    <location>
        <begin position="31"/>
        <end position="153"/>
    </location>
</feature>
<feature type="domain" description="CoV N CTD" evidence="3">
    <location>
        <begin position="223"/>
        <end position="336"/>
    </location>
</feature>
<feature type="region of interest" description="Disordered" evidence="4">
    <location>
        <begin position="1"/>
        <end position="29"/>
    </location>
</feature>
<feature type="region of interest" description="RNA-binding" evidence="1">
    <location>
        <begin position="33"/>
        <end position="159"/>
    </location>
</feature>
<feature type="region of interest" description="Disordered" evidence="4">
    <location>
        <begin position="152"/>
        <end position="239"/>
    </location>
</feature>
<feature type="region of interest" description="Dimerization" evidence="1">
    <location>
        <begin position="230"/>
        <end position="333"/>
    </location>
</feature>
<feature type="region of interest" description="Disordered" evidence="4">
    <location>
        <begin position="331"/>
        <end position="353"/>
    </location>
</feature>
<feature type="compositionally biased region" description="Basic residues" evidence="4">
    <location>
        <begin position="17"/>
        <end position="26"/>
    </location>
</feature>
<feature type="compositionally biased region" description="Low complexity" evidence="4">
    <location>
        <begin position="154"/>
        <end position="183"/>
    </location>
</feature>
<feature type="compositionally biased region" description="Basic and acidic residues" evidence="4">
    <location>
        <begin position="201"/>
        <end position="234"/>
    </location>
</feature>
<feature type="compositionally biased region" description="Basic and acidic residues" evidence="4">
    <location>
        <begin position="333"/>
        <end position="353"/>
    </location>
</feature>
<feature type="modified residue" description="Phosphoserine; by host" evidence="1">
    <location>
        <position position="9"/>
    </location>
</feature>
<feature type="modified residue" description="Phosphoserine; by host" evidence="1">
    <location>
        <position position="253"/>
    </location>
</feature>
<feature type="modified residue" description="Phosphoserine; by host" evidence="1">
    <location>
        <position position="255"/>
    </location>
</feature>
<accession>P36298</accession>
<keyword id="KW-0013">ADP-ribosylation</keyword>
<keyword id="KW-1040">Host Golgi apparatus</keyword>
<keyword id="KW-0597">Phosphoprotein</keyword>
<keyword id="KW-0687">Ribonucleoprotein</keyword>
<keyword id="KW-0694">RNA-binding</keyword>
<keyword id="KW-0804">Transcription</keyword>
<keyword id="KW-0805">Transcription regulation</keyword>
<keyword id="KW-0543">Viral nucleoprotein</keyword>
<keyword id="KW-0946">Virion</keyword>
<gene>
    <name evidence="1" type="primary">N</name>
</gene>
<evidence type="ECO:0000255" key="1">
    <source>
        <dbReference type="HAMAP-Rule" id="MF_04095"/>
    </source>
</evidence>
<evidence type="ECO:0000255" key="2">
    <source>
        <dbReference type="PROSITE-ProRule" id="PRU01276"/>
    </source>
</evidence>
<evidence type="ECO:0000255" key="3">
    <source>
        <dbReference type="PROSITE-ProRule" id="PRU01277"/>
    </source>
</evidence>
<evidence type="ECO:0000256" key="4">
    <source>
        <dbReference type="SAM" id="MobiDB-lite"/>
    </source>
</evidence>
<protein>
    <recommendedName>
        <fullName evidence="1">Nucleoprotein</fullName>
    </recommendedName>
    <alternativeName>
        <fullName evidence="1">Nucleocapsid protein</fullName>
        <shortName evidence="1">NC</shortName>
        <shortName evidence="1">Protein N</shortName>
    </alternativeName>
</protein>
<sequence length="381" mass="43412">MASQGQRVSWGDESTKRRGRSNSRGRKNNDIPLSFFNPITLEQGSKFWDLCPRDFVPKGIGNKDQQIGYWNRQTRYRMVKGRRKNLPEKWFFYYLGTGPHADAKFKQKLDGVVWVARGDSMTKPTTLGTRGTNNESKALKFDVKVPSEFHLEVNQLRDNSRSRSQSRSQSRNRSQSRGRQLSNNKKDDNVEQAVLAALKKLGVDTEKQQRSRSKSKERSSSKTRDTTPKNENKHTWKRTAGKGDVTKFYGARSSSANFGDSDLVANGNGAKHYPQLAECVPSVSSILFGSHWTAKEDGDQIEVTFTHKYHLPKDDPKTGQFLQQINAYARPSEVAKEQRQRKARSKSVERVEQEVVPDALTENYTDVFDDTQVEIIDEVTN</sequence>
<reference key="1">
    <citation type="journal article" date="1992" name="J. Gen. Virol.">
        <title>Analysis of a 9.6 kb sequence from the 3' end of canine coronavirus genomic RNA.</title>
        <authorList>
            <person name="Horsburgh B.C."/>
            <person name="Brierley I."/>
            <person name="Brown T.D.K."/>
        </authorList>
    </citation>
    <scope>NUCLEOTIDE SEQUENCE [GENOMIC RNA]</scope>
</reference>
<organismHost>
    <name type="scientific">Canis lupus familiaris</name>
    <name type="common">Dog</name>
    <name type="synonym">Canis familiaris</name>
    <dbReference type="NCBI Taxonomy" id="9615"/>
</organismHost>
<dbReference type="EMBL" id="D13096">
    <property type="protein sequence ID" value="BAA02414.1"/>
    <property type="molecule type" value="Genomic_RNA"/>
</dbReference>
<dbReference type="PIR" id="JQ1725">
    <property type="entry name" value="JQ1725"/>
</dbReference>
<dbReference type="SMR" id="P36298"/>
<dbReference type="IntAct" id="P36298">
    <property type="interactions" value="1"/>
</dbReference>
<dbReference type="GO" id="GO:0044172">
    <property type="term" value="C:host cell endoplasmic reticulum-Golgi intermediate compartment"/>
    <property type="evidence" value="ECO:0007669"/>
    <property type="project" value="UniProtKB-SubCell"/>
</dbReference>
<dbReference type="GO" id="GO:0044177">
    <property type="term" value="C:host cell Golgi apparatus"/>
    <property type="evidence" value="ECO:0007669"/>
    <property type="project" value="UniProtKB-SubCell"/>
</dbReference>
<dbReference type="GO" id="GO:1990904">
    <property type="term" value="C:ribonucleoprotein complex"/>
    <property type="evidence" value="ECO:0007669"/>
    <property type="project" value="UniProtKB-KW"/>
</dbReference>
<dbReference type="GO" id="GO:0019013">
    <property type="term" value="C:viral nucleocapsid"/>
    <property type="evidence" value="ECO:0007669"/>
    <property type="project" value="UniProtKB-KW"/>
</dbReference>
<dbReference type="GO" id="GO:0003723">
    <property type="term" value="F:RNA binding"/>
    <property type="evidence" value="ECO:0007669"/>
    <property type="project" value="UniProtKB-KW"/>
</dbReference>
<dbReference type="CDD" id="cd21595">
    <property type="entry name" value="CoV_N-CTD"/>
    <property type="match status" value="1"/>
</dbReference>
<dbReference type="CDD" id="cd21554">
    <property type="entry name" value="CoV_N-NTD"/>
    <property type="match status" value="1"/>
</dbReference>
<dbReference type="HAMAP" id="MF_04095">
    <property type="entry name" value="ALPHA_CORONA_NCAP"/>
    <property type="match status" value="1"/>
</dbReference>
<dbReference type="InterPro" id="IPR044344">
    <property type="entry name" value="N_prot_C_CoV"/>
</dbReference>
<dbReference type="InterPro" id="IPR044345">
    <property type="entry name" value="N_prot_N_CoV"/>
</dbReference>
<dbReference type="InterPro" id="IPR042548">
    <property type="entry name" value="NCAP_aCoV"/>
</dbReference>
<dbReference type="InterPro" id="IPR001218">
    <property type="entry name" value="Nucleocap_CoV"/>
</dbReference>
<dbReference type="InterPro" id="IPR037179">
    <property type="entry name" value="Nucleocapsid_C"/>
</dbReference>
<dbReference type="InterPro" id="IPR037195">
    <property type="entry name" value="Nucleocapsid_N"/>
</dbReference>
<dbReference type="Pfam" id="PF00937">
    <property type="entry name" value="CoV_nucleocap"/>
    <property type="match status" value="1"/>
</dbReference>
<dbReference type="PIRSF" id="PIRSF003888">
    <property type="entry name" value="Corona_nucleocap"/>
    <property type="match status" value="1"/>
</dbReference>
<dbReference type="SUPFAM" id="SSF110304">
    <property type="entry name" value="Coronavirus RNA-binding domain"/>
    <property type="match status" value="1"/>
</dbReference>
<dbReference type="SUPFAM" id="SSF103068">
    <property type="entry name" value="Nucleocapsid protein dimerization domain"/>
    <property type="match status" value="1"/>
</dbReference>
<dbReference type="PROSITE" id="PS51929">
    <property type="entry name" value="COV_N_CTD"/>
    <property type="match status" value="1"/>
</dbReference>
<dbReference type="PROSITE" id="PS51928">
    <property type="entry name" value="COV_N_NTD"/>
    <property type="match status" value="1"/>
</dbReference>
<organism>
    <name type="scientific">Canine coronavirus (strain Insavc-1)</name>
    <name type="common">CCoV</name>
    <name type="synonym">Canine enteric coronavirus</name>
    <dbReference type="NCBI Taxonomy" id="36391"/>
    <lineage>
        <taxon>Viruses</taxon>
        <taxon>Riboviria</taxon>
        <taxon>Orthornavirae</taxon>
        <taxon>Pisuviricota</taxon>
        <taxon>Pisoniviricetes</taxon>
        <taxon>Nidovirales</taxon>
        <taxon>Cornidovirineae</taxon>
        <taxon>Coronaviridae</taxon>
        <taxon>Orthocoronavirinae</taxon>
        <taxon>Alphacoronavirus</taxon>
        <taxon>Tegacovirus</taxon>
        <taxon>Alphacoronavirus 1</taxon>
    </lineage>
</organism>